<organism>
    <name type="scientific">Escherichia coli O139:H28 (strain E24377A / ETEC)</name>
    <dbReference type="NCBI Taxonomy" id="331111"/>
    <lineage>
        <taxon>Bacteria</taxon>
        <taxon>Pseudomonadati</taxon>
        <taxon>Pseudomonadota</taxon>
        <taxon>Gammaproteobacteria</taxon>
        <taxon>Enterobacterales</taxon>
        <taxon>Enterobacteriaceae</taxon>
        <taxon>Escherichia</taxon>
    </lineage>
</organism>
<comment type="function">
    <text evidence="1">Quinone reductase that provides resistance to thiol-specific stress caused by electrophilic quinones.</text>
</comment>
<comment type="function">
    <text evidence="1">Also exhibits azoreductase activity. Catalyzes the reductive cleavage of the azo bond in aromatic azo compounds to the corresponding amines.</text>
</comment>
<comment type="catalytic activity">
    <reaction evidence="1">
        <text>2 a quinone + NADH + H(+) = 2 a 1,4-benzosemiquinone + NAD(+)</text>
        <dbReference type="Rhea" id="RHEA:65952"/>
        <dbReference type="ChEBI" id="CHEBI:15378"/>
        <dbReference type="ChEBI" id="CHEBI:57540"/>
        <dbReference type="ChEBI" id="CHEBI:57945"/>
        <dbReference type="ChEBI" id="CHEBI:132124"/>
        <dbReference type="ChEBI" id="CHEBI:134225"/>
    </reaction>
</comment>
<comment type="catalytic activity">
    <reaction evidence="1">
        <text>N,N-dimethyl-1,4-phenylenediamine + anthranilate + 2 NAD(+) = 2-(4-dimethylaminophenyl)diazenylbenzoate + 2 NADH + 2 H(+)</text>
        <dbReference type="Rhea" id="RHEA:55872"/>
        <dbReference type="ChEBI" id="CHEBI:15378"/>
        <dbReference type="ChEBI" id="CHEBI:15783"/>
        <dbReference type="ChEBI" id="CHEBI:16567"/>
        <dbReference type="ChEBI" id="CHEBI:57540"/>
        <dbReference type="ChEBI" id="CHEBI:57945"/>
        <dbReference type="ChEBI" id="CHEBI:71579"/>
        <dbReference type="EC" id="1.7.1.17"/>
    </reaction>
</comment>
<comment type="cofactor">
    <cofactor evidence="1">
        <name>FMN</name>
        <dbReference type="ChEBI" id="CHEBI:58210"/>
    </cofactor>
    <text evidence="1">Binds 1 FMN per subunit.</text>
</comment>
<comment type="subunit">
    <text evidence="1">Homodimer.</text>
</comment>
<comment type="similarity">
    <text evidence="1">Belongs to the azoreductase type 1 family.</text>
</comment>
<gene>
    <name evidence="1" type="primary">azoR</name>
    <name type="ordered locus">EcE24377A_1593</name>
</gene>
<evidence type="ECO:0000255" key="1">
    <source>
        <dbReference type="HAMAP-Rule" id="MF_01216"/>
    </source>
</evidence>
<proteinExistence type="inferred from homology"/>
<reference key="1">
    <citation type="journal article" date="2008" name="J. Bacteriol.">
        <title>The pangenome structure of Escherichia coli: comparative genomic analysis of E. coli commensal and pathogenic isolates.</title>
        <authorList>
            <person name="Rasko D.A."/>
            <person name="Rosovitz M.J."/>
            <person name="Myers G.S.A."/>
            <person name="Mongodin E.F."/>
            <person name="Fricke W.F."/>
            <person name="Gajer P."/>
            <person name="Crabtree J."/>
            <person name="Sebaihia M."/>
            <person name="Thomson N.R."/>
            <person name="Chaudhuri R."/>
            <person name="Henderson I.R."/>
            <person name="Sperandio V."/>
            <person name="Ravel J."/>
        </authorList>
    </citation>
    <scope>NUCLEOTIDE SEQUENCE [LARGE SCALE GENOMIC DNA]</scope>
    <source>
        <strain>E24377A / ETEC</strain>
    </source>
</reference>
<accession>A7ZLK8</accession>
<keyword id="KW-0285">Flavoprotein</keyword>
<keyword id="KW-0288">FMN</keyword>
<keyword id="KW-0520">NAD</keyword>
<keyword id="KW-0560">Oxidoreductase</keyword>
<keyword id="KW-1185">Reference proteome</keyword>
<protein>
    <recommendedName>
        <fullName evidence="1">FMN-dependent NADH:quinone oxidoreductase</fullName>
        <ecNumber evidence="1">1.6.5.-</ecNumber>
    </recommendedName>
    <alternativeName>
        <fullName evidence="1">Azo-dye reductase</fullName>
    </alternativeName>
    <alternativeName>
        <fullName evidence="1">FMN-dependent NADH-azo compound oxidoreductase</fullName>
    </alternativeName>
    <alternativeName>
        <fullName evidence="1">FMN-dependent NADH-azoreductase</fullName>
        <ecNumber evidence="1">1.7.1.17</ecNumber>
    </alternativeName>
</protein>
<name>AZOR_ECO24</name>
<feature type="chain" id="PRO_1000066503" description="FMN-dependent NADH:quinone oxidoreductase">
    <location>
        <begin position="1"/>
        <end position="201"/>
    </location>
</feature>
<feature type="binding site" evidence="1">
    <location>
        <position position="10"/>
    </location>
    <ligand>
        <name>FMN</name>
        <dbReference type="ChEBI" id="CHEBI:58210"/>
    </ligand>
</feature>
<feature type="binding site" evidence="1">
    <location>
        <begin position="16"/>
        <end position="18"/>
    </location>
    <ligand>
        <name>FMN</name>
        <dbReference type="ChEBI" id="CHEBI:58210"/>
    </ligand>
</feature>
<feature type="binding site" evidence="1">
    <location>
        <begin position="96"/>
        <end position="99"/>
    </location>
    <ligand>
        <name>FMN</name>
        <dbReference type="ChEBI" id="CHEBI:58210"/>
    </ligand>
</feature>
<feature type="binding site" evidence="1">
    <location>
        <begin position="140"/>
        <end position="143"/>
    </location>
    <ligand>
        <name>FMN</name>
        <dbReference type="ChEBI" id="CHEBI:58210"/>
    </ligand>
</feature>
<sequence length="201" mass="21642">MSKVLVLKSSILAGYSQSNQLSDYFVEQWREKHSADEITVRDLAANPIPVLDGELVGALRPSDAPLTPRQQEALALSDELIAELKAHDVIVIAAPMYNFNISTQLKNYFDLVARAGVTFRYTENGPEGLVTGKKAIVITSRGGIHKDGPTDLVTPYLSTFLGFIGITDVKFVFAEGIAYGPEMAAKAQSDAKAAIDSIVAA</sequence>
<dbReference type="EC" id="1.6.5.-" evidence="1"/>
<dbReference type="EC" id="1.7.1.17" evidence="1"/>
<dbReference type="EMBL" id="CP000800">
    <property type="protein sequence ID" value="ABV19614.1"/>
    <property type="molecule type" value="Genomic_DNA"/>
</dbReference>
<dbReference type="RefSeq" id="WP_000048948.1">
    <property type="nucleotide sequence ID" value="NC_009801.1"/>
</dbReference>
<dbReference type="SMR" id="A7ZLK8"/>
<dbReference type="GeneID" id="93775555"/>
<dbReference type="KEGG" id="ecw:EcE24377A_1593"/>
<dbReference type="HOGENOM" id="CLU_088964_0_0_6"/>
<dbReference type="Proteomes" id="UP000001122">
    <property type="component" value="Chromosome"/>
</dbReference>
<dbReference type="GO" id="GO:0009055">
    <property type="term" value="F:electron transfer activity"/>
    <property type="evidence" value="ECO:0007669"/>
    <property type="project" value="UniProtKB-UniRule"/>
</dbReference>
<dbReference type="GO" id="GO:0010181">
    <property type="term" value="F:FMN binding"/>
    <property type="evidence" value="ECO:0007669"/>
    <property type="project" value="UniProtKB-UniRule"/>
</dbReference>
<dbReference type="GO" id="GO:0016652">
    <property type="term" value="F:oxidoreductase activity, acting on NAD(P)H as acceptor"/>
    <property type="evidence" value="ECO:0007669"/>
    <property type="project" value="UniProtKB-UniRule"/>
</dbReference>
<dbReference type="GO" id="GO:0016655">
    <property type="term" value="F:oxidoreductase activity, acting on NAD(P)H, quinone or similar compound as acceptor"/>
    <property type="evidence" value="ECO:0007669"/>
    <property type="project" value="InterPro"/>
</dbReference>
<dbReference type="FunFam" id="3.40.50.360:FF:000010">
    <property type="entry name" value="FMN-dependent NADH-azoreductase"/>
    <property type="match status" value="1"/>
</dbReference>
<dbReference type="Gene3D" id="3.40.50.360">
    <property type="match status" value="1"/>
</dbReference>
<dbReference type="HAMAP" id="MF_01216">
    <property type="entry name" value="Azoreductase_type1"/>
    <property type="match status" value="1"/>
</dbReference>
<dbReference type="InterPro" id="IPR003680">
    <property type="entry name" value="Flavodoxin_fold"/>
</dbReference>
<dbReference type="InterPro" id="IPR029039">
    <property type="entry name" value="Flavoprotein-like_sf"/>
</dbReference>
<dbReference type="InterPro" id="IPR050104">
    <property type="entry name" value="FMN-dep_NADH:Q_OxRdtase_AzoR1"/>
</dbReference>
<dbReference type="InterPro" id="IPR023048">
    <property type="entry name" value="NADH:quinone_OxRdtase_FMN_depd"/>
</dbReference>
<dbReference type="PANTHER" id="PTHR43741">
    <property type="entry name" value="FMN-DEPENDENT NADH-AZOREDUCTASE 1"/>
    <property type="match status" value="1"/>
</dbReference>
<dbReference type="PANTHER" id="PTHR43741:SF2">
    <property type="entry name" value="FMN-DEPENDENT NADH:QUINONE OXIDOREDUCTASE"/>
    <property type="match status" value="1"/>
</dbReference>
<dbReference type="Pfam" id="PF02525">
    <property type="entry name" value="Flavodoxin_2"/>
    <property type="match status" value="1"/>
</dbReference>
<dbReference type="SUPFAM" id="SSF52218">
    <property type="entry name" value="Flavoproteins"/>
    <property type="match status" value="1"/>
</dbReference>